<proteinExistence type="inferred from homology"/>
<reference key="1">
    <citation type="journal article" date="2006" name="Proc. Natl. Acad. Sci. U.S.A.">
        <title>Evolution of sensory complexity recorded in a myxobacterial genome.</title>
        <authorList>
            <person name="Goldman B.S."/>
            <person name="Nierman W.C."/>
            <person name="Kaiser D."/>
            <person name="Slater S.C."/>
            <person name="Durkin A.S."/>
            <person name="Eisen J.A."/>
            <person name="Ronning C.M."/>
            <person name="Barbazuk W.B."/>
            <person name="Blanchard M."/>
            <person name="Field C."/>
            <person name="Halling C."/>
            <person name="Hinkle G."/>
            <person name="Iartchuk O."/>
            <person name="Kim H.S."/>
            <person name="Mackenzie C."/>
            <person name="Madupu R."/>
            <person name="Miller N."/>
            <person name="Shvartsbeyn A."/>
            <person name="Sullivan S.A."/>
            <person name="Vaudin M."/>
            <person name="Wiegand R."/>
            <person name="Kaplan H.B."/>
        </authorList>
    </citation>
    <scope>NUCLEOTIDE SEQUENCE [LARGE SCALE GENOMIC DNA]</scope>
    <source>
        <strain>DK1622</strain>
    </source>
</reference>
<protein>
    <recommendedName>
        <fullName evidence="1">Serine--tRNA ligase</fullName>
        <ecNumber evidence="1">6.1.1.11</ecNumber>
    </recommendedName>
    <alternativeName>
        <fullName evidence="1">Seryl-tRNA synthetase</fullName>
        <shortName evidence="1">SerRS</shortName>
    </alternativeName>
    <alternativeName>
        <fullName evidence="1">Seryl-tRNA(Ser/Sec) synthetase</fullName>
    </alternativeName>
</protein>
<name>SYS_MYXXD</name>
<sequence length="426" mass="47838">MLDLRNVAQNFDAVVARLKTRGGNLDLGPFQRLFAERRELYVSVESLAARRNAANEEMKRKAKEDPKALDALRGDLRAVSQEIKEKEARLKDVEEELNRILLLIPNVPHESVPEGGGAEDNVQVSIWGQKPDLLFAPKQHFELGEKLGMLDFERAAKVSGSRFTFYKGALARLERALVTFMIDVHTSKGYTELLPPYLVLRETMMGTGQLPKFEDDAFKTLGEPERFLIPTAEVPVTNYHADEILEGESLPIRYCAFSPSFRAEAGAAGKDTRGLIRQHQFHKVELVKFAHQEKSLDELEAMTDDACDILRRLGIHHRVMLLCTGDMGFAARKTYDIEVWLPGQNSYREISSCSDCGDFQARRAKIRYRAQRGDKPQLAHTLNGSGLAVGRTTIAILENYQREDGSVAIPEALVPYMGGLKELKPI</sequence>
<comment type="function">
    <text evidence="1">Catalyzes the attachment of serine to tRNA(Ser). Is also able to aminoacylate tRNA(Sec) with serine, to form the misacylated tRNA L-seryl-tRNA(Sec), which will be further converted into selenocysteinyl-tRNA(Sec).</text>
</comment>
<comment type="catalytic activity">
    <reaction evidence="1">
        <text>tRNA(Ser) + L-serine + ATP = L-seryl-tRNA(Ser) + AMP + diphosphate + H(+)</text>
        <dbReference type="Rhea" id="RHEA:12292"/>
        <dbReference type="Rhea" id="RHEA-COMP:9669"/>
        <dbReference type="Rhea" id="RHEA-COMP:9703"/>
        <dbReference type="ChEBI" id="CHEBI:15378"/>
        <dbReference type="ChEBI" id="CHEBI:30616"/>
        <dbReference type="ChEBI" id="CHEBI:33019"/>
        <dbReference type="ChEBI" id="CHEBI:33384"/>
        <dbReference type="ChEBI" id="CHEBI:78442"/>
        <dbReference type="ChEBI" id="CHEBI:78533"/>
        <dbReference type="ChEBI" id="CHEBI:456215"/>
        <dbReference type="EC" id="6.1.1.11"/>
    </reaction>
</comment>
<comment type="catalytic activity">
    <reaction evidence="1">
        <text>tRNA(Sec) + L-serine + ATP = L-seryl-tRNA(Sec) + AMP + diphosphate + H(+)</text>
        <dbReference type="Rhea" id="RHEA:42580"/>
        <dbReference type="Rhea" id="RHEA-COMP:9742"/>
        <dbReference type="Rhea" id="RHEA-COMP:10128"/>
        <dbReference type="ChEBI" id="CHEBI:15378"/>
        <dbReference type="ChEBI" id="CHEBI:30616"/>
        <dbReference type="ChEBI" id="CHEBI:33019"/>
        <dbReference type="ChEBI" id="CHEBI:33384"/>
        <dbReference type="ChEBI" id="CHEBI:78442"/>
        <dbReference type="ChEBI" id="CHEBI:78533"/>
        <dbReference type="ChEBI" id="CHEBI:456215"/>
        <dbReference type="EC" id="6.1.1.11"/>
    </reaction>
</comment>
<comment type="pathway">
    <text evidence="1">Aminoacyl-tRNA biosynthesis; selenocysteinyl-tRNA(Sec) biosynthesis; L-seryl-tRNA(Sec) from L-serine and tRNA(Sec): step 1/1.</text>
</comment>
<comment type="subunit">
    <text evidence="1">Homodimer. The tRNA molecule binds across the dimer.</text>
</comment>
<comment type="subcellular location">
    <subcellularLocation>
        <location evidence="1">Cytoplasm</location>
    </subcellularLocation>
</comment>
<comment type="domain">
    <text evidence="1">Consists of two distinct domains, a catalytic core and a N-terminal extension that is involved in tRNA binding.</text>
</comment>
<comment type="similarity">
    <text evidence="1">Belongs to the class-II aminoacyl-tRNA synthetase family. Type-1 seryl-tRNA synthetase subfamily.</text>
</comment>
<evidence type="ECO:0000255" key="1">
    <source>
        <dbReference type="HAMAP-Rule" id="MF_00176"/>
    </source>
</evidence>
<accession>Q1DAZ4</accession>
<organism>
    <name type="scientific">Myxococcus xanthus (strain DK1622)</name>
    <dbReference type="NCBI Taxonomy" id="246197"/>
    <lineage>
        <taxon>Bacteria</taxon>
        <taxon>Pseudomonadati</taxon>
        <taxon>Myxococcota</taxon>
        <taxon>Myxococcia</taxon>
        <taxon>Myxococcales</taxon>
        <taxon>Cystobacterineae</taxon>
        <taxon>Myxococcaceae</taxon>
        <taxon>Myxococcus</taxon>
    </lineage>
</organism>
<gene>
    <name evidence="1" type="primary">serS</name>
    <name type="ordered locus">MXAN_1941</name>
</gene>
<dbReference type="EC" id="6.1.1.11" evidence="1"/>
<dbReference type="EMBL" id="CP000113">
    <property type="protein sequence ID" value="ABF86369.1"/>
    <property type="molecule type" value="Genomic_DNA"/>
</dbReference>
<dbReference type="RefSeq" id="WP_011552034.1">
    <property type="nucleotide sequence ID" value="NC_008095.1"/>
</dbReference>
<dbReference type="SMR" id="Q1DAZ4"/>
<dbReference type="STRING" id="246197.MXAN_1941"/>
<dbReference type="EnsemblBacteria" id="ABF86369">
    <property type="protein sequence ID" value="ABF86369"/>
    <property type="gene ID" value="MXAN_1941"/>
</dbReference>
<dbReference type="GeneID" id="41359354"/>
<dbReference type="KEGG" id="mxa:MXAN_1941"/>
<dbReference type="eggNOG" id="COG0172">
    <property type="taxonomic scope" value="Bacteria"/>
</dbReference>
<dbReference type="HOGENOM" id="CLU_023797_1_1_7"/>
<dbReference type="OrthoDB" id="9804647at2"/>
<dbReference type="UniPathway" id="UPA00906">
    <property type="reaction ID" value="UER00895"/>
</dbReference>
<dbReference type="Proteomes" id="UP000002402">
    <property type="component" value="Chromosome"/>
</dbReference>
<dbReference type="GO" id="GO:0005737">
    <property type="term" value="C:cytoplasm"/>
    <property type="evidence" value="ECO:0007669"/>
    <property type="project" value="UniProtKB-SubCell"/>
</dbReference>
<dbReference type="GO" id="GO:0005524">
    <property type="term" value="F:ATP binding"/>
    <property type="evidence" value="ECO:0007669"/>
    <property type="project" value="UniProtKB-UniRule"/>
</dbReference>
<dbReference type="GO" id="GO:0004828">
    <property type="term" value="F:serine-tRNA ligase activity"/>
    <property type="evidence" value="ECO:0007669"/>
    <property type="project" value="UniProtKB-UniRule"/>
</dbReference>
<dbReference type="GO" id="GO:0016260">
    <property type="term" value="P:selenocysteine biosynthetic process"/>
    <property type="evidence" value="ECO:0007669"/>
    <property type="project" value="UniProtKB-UniRule"/>
</dbReference>
<dbReference type="GO" id="GO:0006434">
    <property type="term" value="P:seryl-tRNA aminoacylation"/>
    <property type="evidence" value="ECO:0007669"/>
    <property type="project" value="UniProtKB-UniRule"/>
</dbReference>
<dbReference type="CDD" id="cd00770">
    <property type="entry name" value="SerRS_core"/>
    <property type="match status" value="1"/>
</dbReference>
<dbReference type="Gene3D" id="3.30.930.10">
    <property type="entry name" value="Bira Bifunctional Protein, Domain 2"/>
    <property type="match status" value="1"/>
</dbReference>
<dbReference type="Gene3D" id="1.10.287.40">
    <property type="entry name" value="Serine-tRNA synthetase, tRNA binding domain"/>
    <property type="match status" value="1"/>
</dbReference>
<dbReference type="HAMAP" id="MF_00176">
    <property type="entry name" value="Ser_tRNA_synth_type1"/>
    <property type="match status" value="1"/>
</dbReference>
<dbReference type="InterPro" id="IPR002314">
    <property type="entry name" value="aa-tRNA-synt_IIb"/>
</dbReference>
<dbReference type="InterPro" id="IPR006195">
    <property type="entry name" value="aa-tRNA-synth_II"/>
</dbReference>
<dbReference type="InterPro" id="IPR045864">
    <property type="entry name" value="aa-tRNA-synth_II/BPL/LPL"/>
</dbReference>
<dbReference type="InterPro" id="IPR002317">
    <property type="entry name" value="Ser-tRNA-ligase_type_1"/>
</dbReference>
<dbReference type="InterPro" id="IPR015866">
    <property type="entry name" value="Ser-tRNA-synth_1_N"/>
</dbReference>
<dbReference type="InterPro" id="IPR042103">
    <property type="entry name" value="SerRS_1_N_sf"/>
</dbReference>
<dbReference type="InterPro" id="IPR033729">
    <property type="entry name" value="SerRS_core"/>
</dbReference>
<dbReference type="InterPro" id="IPR010978">
    <property type="entry name" value="tRNA-bd_arm"/>
</dbReference>
<dbReference type="NCBIfam" id="TIGR00414">
    <property type="entry name" value="serS"/>
    <property type="match status" value="1"/>
</dbReference>
<dbReference type="PANTHER" id="PTHR43697:SF1">
    <property type="entry name" value="SERINE--TRNA LIGASE"/>
    <property type="match status" value="1"/>
</dbReference>
<dbReference type="PANTHER" id="PTHR43697">
    <property type="entry name" value="SERYL-TRNA SYNTHETASE"/>
    <property type="match status" value="1"/>
</dbReference>
<dbReference type="Pfam" id="PF02403">
    <property type="entry name" value="Seryl_tRNA_N"/>
    <property type="match status" value="1"/>
</dbReference>
<dbReference type="Pfam" id="PF00587">
    <property type="entry name" value="tRNA-synt_2b"/>
    <property type="match status" value="1"/>
</dbReference>
<dbReference type="PIRSF" id="PIRSF001529">
    <property type="entry name" value="Ser-tRNA-synth_IIa"/>
    <property type="match status" value="1"/>
</dbReference>
<dbReference type="PRINTS" id="PR00981">
    <property type="entry name" value="TRNASYNTHSER"/>
</dbReference>
<dbReference type="SUPFAM" id="SSF55681">
    <property type="entry name" value="Class II aaRS and biotin synthetases"/>
    <property type="match status" value="1"/>
</dbReference>
<dbReference type="SUPFAM" id="SSF46589">
    <property type="entry name" value="tRNA-binding arm"/>
    <property type="match status" value="1"/>
</dbReference>
<dbReference type="PROSITE" id="PS50862">
    <property type="entry name" value="AA_TRNA_LIGASE_II"/>
    <property type="match status" value="1"/>
</dbReference>
<keyword id="KW-0030">Aminoacyl-tRNA synthetase</keyword>
<keyword id="KW-0067">ATP-binding</keyword>
<keyword id="KW-0963">Cytoplasm</keyword>
<keyword id="KW-0436">Ligase</keyword>
<keyword id="KW-0547">Nucleotide-binding</keyword>
<keyword id="KW-0648">Protein biosynthesis</keyword>
<keyword id="KW-1185">Reference proteome</keyword>
<feature type="chain" id="PRO_1000019745" description="Serine--tRNA ligase">
    <location>
        <begin position="1"/>
        <end position="426"/>
    </location>
</feature>
<feature type="binding site" evidence="1">
    <location>
        <begin position="231"/>
        <end position="233"/>
    </location>
    <ligand>
        <name>L-serine</name>
        <dbReference type="ChEBI" id="CHEBI:33384"/>
    </ligand>
</feature>
<feature type="binding site" evidence="1">
    <location>
        <begin position="262"/>
        <end position="264"/>
    </location>
    <ligand>
        <name>ATP</name>
        <dbReference type="ChEBI" id="CHEBI:30616"/>
    </ligand>
</feature>
<feature type="binding site" evidence="1">
    <location>
        <position position="285"/>
    </location>
    <ligand>
        <name>L-serine</name>
        <dbReference type="ChEBI" id="CHEBI:33384"/>
    </ligand>
</feature>
<feature type="binding site" evidence="1">
    <location>
        <begin position="349"/>
        <end position="352"/>
    </location>
    <ligand>
        <name>ATP</name>
        <dbReference type="ChEBI" id="CHEBI:30616"/>
    </ligand>
</feature>
<feature type="binding site" evidence="1">
    <location>
        <position position="385"/>
    </location>
    <ligand>
        <name>L-serine</name>
        <dbReference type="ChEBI" id="CHEBI:33384"/>
    </ligand>
</feature>